<gene>
    <name evidence="1" type="primary">caiB</name>
    <name type="ordered locus">ECIAI39_0039</name>
</gene>
<protein>
    <recommendedName>
        <fullName evidence="1">L-carnitine CoA-transferase</fullName>
        <ecNumber evidence="1">2.8.3.21</ecNumber>
    </recommendedName>
    <alternativeName>
        <fullName evidence="1">Crotonobetainyl-CoA:carnitine CoA-transferase</fullName>
    </alternativeName>
</protein>
<evidence type="ECO:0000255" key="1">
    <source>
        <dbReference type="HAMAP-Rule" id="MF_01050"/>
    </source>
</evidence>
<name>CAIB_ECO7I</name>
<reference key="1">
    <citation type="journal article" date="2009" name="PLoS Genet.">
        <title>Organised genome dynamics in the Escherichia coli species results in highly diverse adaptive paths.</title>
        <authorList>
            <person name="Touchon M."/>
            <person name="Hoede C."/>
            <person name="Tenaillon O."/>
            <person name="Barbe V."/>
            <person name="Baeriswyl S."/>
            <person name="Bidet P."/>
            <person name="Bingen E."/>
            <person name="Bonacorsi S."/>
            <person name="Bouchier C."/>
            <person name="Bouvet O."/>
            <person name="Calteau A."/>
            <person name="Chiapello H."/>
            <person name="Clermont O."/>
            <person name="Cruveiller S."/>
            <person name="Danchin A."/>
            <person name="Diard M."/>
            <person name="Dossat C."/>
            <person name="Karoui M.E."/>
            <person name="Frapy E."/>
            <person name="Garry L."/>
            <person name="Ghigo J.M."/>
            <person name="Gilles A.M."/>
            <person name="Johnson J."/>
            <person name="Le Bouguenec C."/>
            <person name="Lescat M."/>
            <person name="Mangenot S."/>
            <person name="Martinez-Jehanne V."/>
            <person name="Matic I."/>
            <person name="Nassif X."/>
            <person name="Oztas S."/>
            <person name="Petit M.A."/>
            <person name="Pichon C."/>
            <person name="Rouy Z."/>
            <person name="Ruf C.S."/>
            <person name="Schneider D."/>
            <person name="Tourret J."/>
            <person name="Vacherie B."/>
            <person name="Vallenet D."/>
            <person name="Medigue C."/>
            <person name="Rocha E.P.C."/>
            <person name="Denamur E."/>
        </authorList>
    </citation>
    <scope>NUCLEOTIDE SEQUENCE [LARGE SCALE GENOMIC DNA]</scope>
    <source>
        <strain>IAI39 / ExPEC</strain>
    </source>
</reference>
<feature type="chain" id="PRO_1000136247" description="L-carnitine CoA-transferase">
    <location>
        <begin position="1"/>
        <end position="405"/>
    </location>
</feature>
<feature type="active site" description="Nucleophile" evidence="1">
    <location>
        <position position="169"/>
    </location>
</feature>
<feature type="binding site" evidence="1">
    <location>
        <position position="97"/>
    </location>
    <ligand>
        <name>CoA</name>
        <dbReference type="ChEBI" id="CHEBI:57287"/>
    </ligand>
</feature>
<feature type="binding site" evidence="1">
    <location>
        <position position="104"/>
    </location>
    <ligand>
        <name>CoA</name>
        <dbReference type="ChEBI" id="CHEBI:57287"/>
    </ligand>
</feature>
<comment type="function">
    <text evidence="1">Catalyzes the reversible transfer of the CoA moiety from gamma-butyrobetainyl-CoA to L-carnitine to generate L-carnitinyl-CoA and gamma-butyrobetaine. Is also able to catalyze the reversible transfer of the CoA moiety from gamma-butyrobetainyl-CoA or L-carnitinyl-CoA to crotonobetaine to generate crotonobetainyl-CoA.</text>
</comment>
<comment type="catalytic activity">
    <reaction evidence="1">
        <text>crotonobetainyl-CoA + (R)-carnitine = crotonobetaine + (R)-carnitinyl-CoA</text>
        <dbReference type="Rhea" id="RHEA:28526"/>
        <dbReference type="ChEBI" id="CHEBI:16347"/>
        <dbReference type="ChEBI" id="CHEBI:17237"/>
        <dbReference type="ChEBI" id="CHEBI:60932"/>
        <dbReference type="ChEBI" id="CHEBI:60933"/>
        <dbReference type="EC" id="2.8.3.21"/>
    </reaction>
</comment>
<comment type="catalytic activity">
    <reaction evidence="1">
        <text>4-(trimethylamino)butanoyl-CoA + (R)-carnitine = (R)-carnitinyl-CoA + 4-(trimethylamino)butanoate</text>
        <dbReference type="Rhea" id="RHEA:28418"/>
        <dbReference type="ChEBI" id="CHEBI:16244"/>
        <dbReference type="ChEBI" id="CHEBI:16347"/>
        <dbReference type="ChEBI" id="CHEBI:60932"/>
        <dbReference type="ChEBI" id="CHEBI:61513"/>
        <dbReference type="EC" id="2.8.3.21"/>
    </reaction>
</comment>
<comment type="pathway">
    <text evidence="1">Amine and polyamine metabolism; carnitine metabolism.</text>
</comment>
<comment type="subunit">
    <text evidence="1">Homodimer.</text>
</comment>
<comment type="subcellular location">
    <subcellularLocation>
        <location evidence="1">Cytoplasm</location>
    </subcellularLocation>
</comment>
<comment type="similarity">
    <text evidence="1">Belongs to the CoA-transferase III family. CaiB subfamily.</text>
</comment>
<organism>
    <name type="scientific">Escherichia coli O7:K1 (strain IAI39 / ExPEC)</name>
    <dbReference type="NCBI Taxonomy" id="585057"/>
    <lineage>
        <taxon>Bacteria</taxon>
        <taxon>Pseudomonadati</taxon>
        <taxon>Pseudomonadota</taxon>
        <taxon>Gammaproteobacteria</taxon>
        <taxon>Enterobacterales</taxon>
        <taxon>Enterobacteriaceae</taxon>
        <taxon>Escherichia</taxon>
    </lineage>
</organism>
<dbReference type="EC" id="2.8.3.21" evidence="1"/>
<dbReference type="EMBL" id="CU928164">
    <property type="protein sequence ID" value="CAR16180.1"/>
    <property type="molecule type" value="Genomic_DNA"/>
</dbReference>
<dbReference type="RefSeq" id="WP_000349942.1">
    <property type="nucleotide sequence ID" value="NC_011750.1"/>
</dbReference>
<dbReference type="RefSeq" id="YP_002406087.1">
    <property type="nucleotide sequence ID" value="NC_011750.1"/>
</dbReference>
<dbReference type="SMR" id="B7NHE2"/>
<dbReference type="STRING" id="585057.ECIAI39_0039"/>
<dbReference type="KEGG" id="ect:ECIAI39_0039"/>
<dbReference type="PATRIC" id="fig|585057.6.peg.41"/>
<dbReference type="HOGENOM" id="CLU_033975_2_0_6"/>
<dbReference type="UniPathway" id="UPA00117"/>
<dbReference type="Proteomes" id="UP000000749">
    <property type="component" value="Chromosome"/>
</dbReference>
<dbReference type="GO" id="GO:0005737">
    <property type="term" value="C:cytoplasm"/>
    <property type="evidence" value="ECO:0007669"/>
    <property type="project" value="UniProtKB-SubCell"/>
</dbReference>
<dbReference type="GO" id="GO:0008735">
    <property type="term" value="F:L-carnitine CoA-transferase activity"/>
    <property type="evidence" value="ECO:0007669"/>
    <property type="project" value="RHEA"/>
</dbReference>
<dbReference type="GO" id="GO:0009437">
    <property type="term" value="P:carnitine metabolic process"/>
    <property type="evidence" value="ECO:0007669"/>
    <property type="project" value="UniProtKB-UniRule"/>
</dbReference>
<dbReference type="FunFam" id="3.30.1540.10:FF:000001">
    <property type="entry name" value="L-carnitine CoA-transferase"/>
    <property type="match status" value="1"/>
</dbReference>
<dbReference type="Gene3D" id="3.40.50.10540">
    <property type="entry name" value="Crotonobetainyl-coa:carnitine coa-transferase, domain 1"/>
    <property type="match status" value="1"/>
</dbReference>
<dbReference type="Gene3D" id="3.30.1540.10">
    <property type="entry name" value="formyl-coa transferase, domain 3"/>
    <property type="match status" value="1"/>
</dbReference>
<dbReference type="HAMAP" id="MF_01050">
    <property type="entry name" value="CaiB"/>
    <property type="match status" value="1"/>
</dbReference>
<dbReference type="InterPro" id="IPR050509">
    <property type="entry name" value="CoA-transferase_III"/>
</dbReference>
<dbReference type="InterPro" id="IPR023452">
    <property type="entry name" value="CoA-Trfase_CaiB"/>
</dbReference>
<dbReference type="InterPro" id="IPR003673">
    <property type="entry name" value="CoA-Trfase_fam_III"/>
</dbReference>
<dbReference type="InterPro" id="IPR044855">
    <property type="entry name" value="CoA-Trfase_III_dom3_sf"/>
</dbReference>
<dbReference type="InterPro" id="IPR023606">
    <property type="entry name" value="CoA-Trfase_III_dom_1_sf"/>
</dbReference>
<dbReference type="NCBIfam" id="NF002914">
    <property type="entry name" value="PRK03525.1"/>
    <property type="match status" value="1"/>
</dbReference>
<dbReference type="PANTHER" id="PTHR48228:SF6">
    <property type="entry name" value="L-CARNITINE COA-TRANSFERASE"/>
    <property type="match status" value="1"/>
</dbReference>
<dbReference type="PANTHER" id="PTHR48228">
    <property type="entry name" value="SUCCINYL-COA--D-CITRAMALATE COA-TRANSFERASE"/>
    <property type="match status" value="1"/>
</dbReference>
<dbReference type="Pfam" id="PF02515">
    <property type="entry name" value="CoA_transf_3"/>
    <property type="match status" value="1"/>
</dbReference>
<dbReference type="SUPFAM" id="SSF89796">
    <property type="entry name" value="CoA-transferase family III (CaiB/BaiF)"/>
    <property type="match status" value="1"/>
</dbReference>
<proteinExistence type="inferred from homology"/>
<keyword id="KW-0963">Cytoplasm</keyword>
<keyword id="KW-0808">Transferase</keyword>
<sequence length="405" mass="45053">MDHLPMPKFGPLAGLRVVFSGIEIAGPFAGQMFAEWGAEVIWIENVAWADTIRVQPNYPQLSRRNLHALSLNIFKDEGREAFLKLMETTDIFIEASKGPAFARRGITDEVLWQHNPKLVIAHLSGFGQYGTEEYTNLPAYNTIAQAFSGYLIQNGDVDQPMPAFPYTADYFSGLTATTAALAALHKVRETGKGESIDIAMYEVMLRMGQYFMMDYFNGGEMCPRMTKGKDPYYAGCGLYKCADGYIVMELVGITQIAECFKDIGLAHLLGTPEIPEGTQLIHRIECPYGPLVEEKLDAWLAAHTIAEVKERFAELNIACAKVLTVPELESNPQYVARESITQWQTMDGRTCKGPNIMPKFKNNPGQIWRGMPSHGMDTAAILKNIGYSENDIQELVSKGLAKVED</sequence>
<accession>B7NHE2</accession>